<organism>
    <name type="scientific">Paramagnetospirillum magneticum (strain ATCC 700264 / AMB-1)</name>
    <name type="common">Magnetospirillum magneticum</name>
    <dbReference type="NCBI Taxonomy" id="342108"/>
    <lineage>
        <taxon>Bacteria</taxon>
        <taxon>Pseudomonadati</taxon>
        <taxon>Pseudomonadota</taxon>
        <taxon>Alphaproteobacteria</taxon>
        <taxon>Rhodospirillales</taxon>
        <taxon>Magnetospirillaceae</taxon>
        <taxon>Paramagnetospirillum</taxon>
    </lineage>
</organism>
<accession>Q2W2H3</accession>
<protein>
    <recommendedName>
        <fullName evidence="2">Elongation factor Tu</fullName>
        <shortName evidence="2">EF-Tu</shortName>
        <ecNumber evidence="2">3.6.5.3</ecNumber>
    </recommendedName>
</protein>
<name>EFTU_PARM1</name>
<proteinExistence type="inferred from homology"/>
<feature type="chain" id="PRO_0000337427" description="Elongation factor Tu">
    <location>
        <begin position="1"/>
        <end position="396"/>
    </location>
</feature>
<feature type="domain" description="tr-type G">
    <location>
        <begin position="10"/>
        <end position="206"/>
    </location>
</feature>
<feature type="region of interest" description="G1" evidence="1">
    <location>
        <begin position="19"/>
        <end position="26"/>
    </location>
</feature>
<feature type="region of interest" description="G2" evidence="1">
    <location>
        <begin position="60"/>
        <end position="64"/>
    </location>
</feature>
<feature type="region of interest" description="G3" evidence="1">
    <location>
        <begin position="81"/>
        <end position="84"/>
    </location>
</feature>
<feature type="region of interest" description="G4" evidence="1">
    <location>
        <begin position="136"/>
        <end position="139"/>
    </location>
</feature>
<feature type="region of interest" description="G5" evidence="1">
    <location>
        <begin position="174"/>
        <end position="176"/>
    </location>
</feature>
<feature type="binding site" evidence="2">
    <location>
        <begin position="19"/>
        <end position="26"/>
    </location>
    <ligand>
        <name>GTP</name>
        <dbReference type="ChEBI" id="CHEBI:37565"/>
    </ligand>
</feature>
<feature type="binding site" evidence="2">
    <location>
        <position position="26"/>
    </location>
    <ligand>
        <name>Mg(2+)</name>
        <dbReference type="ChEBI" id="CHEBI:18420"/>
    </ligand>
</feature>
<feature type="binding site" evidence="2">
    <location>
        <begin position="81"/>
        <end position="85"/>
    </location>
    <ligand>
        <name>GTP</name>
        <dbReference type="ChEBI" id="CHEBI:37565"/>
    </ligand>
</feature>
<feature type="binding site" evidence="2">
    <location>
        <begin position="136"/>
        <end position="139"/>
    </location>
    <ligand>
        <name>GTP</name>
        <dbReference type="ChEBI" id="CHEBI:37565"/>
    </ligand>
</feature>
<keyword id="KW-0963">Cytoplasm</keyword>
<keyword id="KW-0251">Elongation factor</keyword>
<keyword id="KW-0342">GTP-binding</keyword>
<keyword id="KW-0378">Hydrolase</keyword>
<keyword id="KW-0460">Magnesium</keyword>
<keyword id="KW-0479">Metal-binding</keyword>
<keyword id="KW-0547">Nucleotide-binding</keyword>
<keyword id="KW-0648">Protein biosynthesis</keyword>
<reference key="1">
    <citation type="journal article" date="2005" name="DNA Res.">
        <title>Complete genome sequence of the facultative anaerobic magnetotactic bacterium Magnetospirillum sp. strain AMB-1.</title>
        <authorList>
            <person name="Matsunaga T."/>
            <person name="Okamura Y."/>
            <person name="Fukuda Y."/>
            <person name="Wahyudi A.T."/>
            <person name="Murase Y."/>
            <person name="Takeyama H."/>
        </authorList>
    </citation>
    <scope>NUCLEOTIDE SEQUENCE [LARGE SCALE GENOMIC DNA]</scope>
    <source>
        <strain>ATCC 700264 / AMB-1</strain>
    </source>
</reference>
<dbReference type="EC" id="3.6.5.3" evidence="2"/>
<dbReference type="EMBL" id="AP007255">
    <property type="protein sequence ID" value="BAE51936.1"/>
    <property type="molecule type" value="Genomic_DNA"/>
</dbReference>
<dbReference type="EMBL" id="AP007255">
    <property type="protein sequence ID" value="BAE51952.1"/>
    <property type="molecule type" value="Genomic_DNA"/>
</dbReference>
<dbReference type="RefSeq" id="WP_011385499.1">
    <property type="nucleotide sequence ID" value="NC_007626.1"/>
</dbReference>
<dbReference type="SMR" id="Q2W2H3"/>
<dbReference type="STRING" id="342108.amb3132"/>
<dbReference type="KEGG" id="mag:amb3132"/>
<dbReference type="KEGG" id="mag:amb3148"/>
<dbReference type="HOGENOM" id="CLU_007265_0_0_5"/>
<dbReference type="OrthoDB" id="9804504at2"/>
<dbReference type="Proteomes" id="UP000007058">
    <property type="component" value="Chromosome"/>
</dbReference>
<dbReference type="GO" id="GO:0005829">
    <property type="term" value="C:cytosol"/>
    <property type="evidence" value="ECO:0007669"/>
    <property type="project" value="TreeGrafter"/>
</dbReference>
<dbReference type="GO" id="GO:0005525">
    <property type="term" value="F:GTP binding"/>
    <property type="evidence" value="ECO:0007669"/>
    <property type="project" value="UniProtKB-UniRule"/>
</dbReference>
<dbReference type="GO" id="GO:0003924">
    <property type="term" value="F:GTPase activity"/>
    <property type="evidence" value="ECO:0007669"/>
    <property type="project" value="InterPro"/>
</dbReference>
<dbReference type="GO" id="GO:0097216">
    <property type="term" value="F:guanosine tetraphosphate binding"/>
    <property type="evidence" value="ECO:0007669"/>
    <property type="project" value="UniProtKB-ARBA"/>
</dbReference>
<dbReference type="GO" id="GO:0003746">
    <property type="term" value="F:translation elongation factor activity"/>
    <property type="evidence" value="ECO:0007669"/>
    <property type="project" value="UniProtKB-UniRule"/>
</dbReference>
<dbReference type="CDD" id="cd01884">
    <property type="entry name" value="EF_Tu"/>
    <property type="match status" value="1"/>
</dbReference>
<dbReference type="CDD" id="cd03697">
    <property type="entry name" value="EFTU_II"/>
    <property type="match status" value="1"/>
</dbReference>
<dbReference type="CDD" id="cd03707">
    <property type="entry name" value="EFTU_III"/>
    <property type="match status" value="1"/>
</dbReference>
<dbReference type="FunFam" id="2.40.30.10:FF:000001">
    <property type="entry name" value="Elongation factor Tu"/>
    <property type="match status" value="1"/>
</dbReference>
<dbReference type="FunFam" id="3.40.50.300:FF:000003">
    <property type="entry name" value="Elongation factor Tu"/>
    <property type="match status" value="1"/>
</dbReference>
<dbReference type="Gene3D" id="3.40.50.300">
    <property type="entry name" value="P-loop containing nucleotide triphosphate hydrolases"/>
    <property type="match status" value="1"/>
</dbReference>
<dbReference type="Gene3D" id="2.40.30.10">
    <property type="entry name" value="Translation factors"/>
    <property type="match status" value="2"/>
</dbReference>
<dbReference type="HAMAP" id="MF_00118_B">
    <property type="entry name" value="EF_Tu_B"/>
    <property type="match status" value="1"/>
</dbReference>
<dbReference type="InterPro" id="IPR041709">
    <property type="entry name" value="EF-Tu_GTP-bd"/>
</dbReference>
<dbReference type="InterPro" id="IPR050055">
    <property type="entry name" value="EF-Tu_GTPase"/>
</dbReference>
<dbReference type="InterPro" id="IPR004161">
    <property type="entry name" value="EFTu-like_2"/>
</dbReference>
<dbReference type="InterPro" id="IPR033720">
    <property type="entry name" value="EFTU_2"/>
</dbReference>
<dbReference type="InterPro" id="IPR031157">
    <property type="entry name" value="G_TR_CS"/>
</dbReference>
<dbReference type="InterPro" id="IPR027417">
    <property type="entry name" value="P-loop_NTPase"/>
</dbReference>
<dbReference type="InterPro" id="IPR005225">
    <property type="entry name" value="Small_GTP-bd"/>
</dbReference>
<dbReference type="InterPro" id="IPR000795">
    <property type="entry name" value="T_Tr_GTP-bd_dom"/>
</dbReference>
<dbReference type="InterPro" id="IPR009000">
    <property type="entry name" value="Transl_B-barrel_sf"/>
</dbReference>
<dbReference type="InterPro" id="IPR009001">
    <property type="entry name" value="Transl_elong_EF1A/Init_IF2_C"/>
</dbReference>
<dbReference type="InterPro" id="IPR004541">
    <property type="entry name" value="Transl_elong_EFTu/EF1A_bac/org"/>
</dbReference>
<dbReference type="InterPro" id="IPR004160">
    <property type="entry name" value="Transl_elong_EFTu/EF1A_C"/>
</dbReference>
<dbReference type="NCBIfam" id="TIGR00485">
    <property type="entry name" value="EF-Tu"/>
    <property type="match status" value="1"/>
</dbReference>
<dbReference type="NCBIfam" id="NF000766">
    <property type="entry name" value="PRK00049.1"/>
    <property type="match status" value="1"/>
</dbReference>
<dbReference type="NCBIfam" id="NF009372">
    <property type="entry name" value="PRK12735.1"/>
    <property type="match status" value="1"/>
</dbReference>
<dbReference type="NCBIfam" id="NF009373">
    <property type="entry name" value="PRK12736.1"/>
    <property type="match status" value="1"/>
</dbReference>
<dbReference type="NCBIfam" id="TIGR00231">
    <property type="entry name" value="small_GTP"/>
    <property type="match status" value="1"/>
</dbReference>
<dbReference type="PANTHER" id="PTHR43721:SF22">
    <property type="entry name" value="ELONGATION FACTOR TU, MITOCHONDRIAL"/>
    <property type="match status" value="1"/>
</dbReference>
<dbReference type="PANTHER" id="PTHR43721">
    <property type="entry name" value="ELONGATION FACTOR TU-RELATED"/>
    <property type="match status" value="1"/>
</dbReference>
<dbReference type="Pfam" id="PF00009">
    <property type="entry name" value="GTP_EFTU"/>
    <property type="match status" value="1"/>
</dbReference>
<dbReference type="Pfam" id="PF03144">
    <property type="entry name" value="GTP_EFTU_D2"/>
    <property type="match status" value="1"/>
</dbReference>
<dbReference type="Pfam" id="PF03143">
    <property type="entry name" value="GTP_EFTU_D3"/>
    <property type="match status" value="1"/>
</dbReference>
<dbReference type="PRINTS" id="PR00315">
    <property type="entry name" value="ELONGATNFCT"/>
</dbReference>
<dbReference type="SUPFAM" id="SSF50465">
    <property type="entry name" value="EF-Tu/eEF-1alpha/eIF2-gamma C-terminal domain"/>
    <property type="match status" value="1"/>
</dbReference>
<dbReference type="SUPFAM" id="SSF52540">
    <property type="entry name" value="P-loop containing nucleoside triphosphate hydrolases"/>
    <property type="match status" value="1"/>
</dbReference>
<dbReference type="SUPFAM" id="SSF50447">
    <property type="entry name" value="Translation proteins"/>
    <property type="match status" value="1"/>
</dbReference>
<dbReference type="PROSITE" id="PS00301">
    <property type="entry name" value="G_TR_1"/>
    <property type="match status" value="1"/>
</dbReference>
<dbReference type="PROSITE" id="PS51722">
    <property type="entry name" value="G_TR_2"/>
    <property type="match status" value="1"/>
</dbReference>
<gene>
    <name evidence="2" type="primary">tuf1</name>
    <name type="ordered locus">amb3132</name>
</gene>
<gene>
    <name evidence="2" type="primary">tuf2</name>
    <name type="ordered locus">amb3148</name>
</gene>
<sequence>MAKAKFERNKPHCNIGTIGHVDHGKTSLTAAITKILAETGGATFTAYDQIDKAPEEKARGITISTAHVEYETSNRHYAHVDCPGHADYVKNMITGAAQMDGAILVVSAADGPMPQTREHILLARQVGVPALVVFMNKCDMVDDPELLDLVELEVRELLSSYDFPGDDIPIVRGSALCALEDKQPEIGRDAILKLMAEVDAYIPQPERPKDKPFLMPIEDVFSISGRGTVVTGRVERGVVKVGEEVEIVGIKNTVKTTCTGVEMFRKLLDQGEAGDNIGALLRGTKREDVERGQVLAAPGSITPHTDFEAEAYILNKEEGGRHTPFFTNYRPQFYFRTTDVTGVVALPEGTEMVMPGDNVKMIVTLIAPIAMDQGLRFAIREGGRTVGAGVVAKIIK</sequence>
<evidence type="ECO:0000250" key="1"/>
<evidence type="ECO:0000255" key="2">
    <source>
        <dbReference type="HAMAP-Rule" id="MF_00118"/>
    </source>
</evidence>
<comment type="function">
    <text evidence="2">GTP hydrolase that promotes the GTP-dependent binding of aminoacyl-tRNA to the A-site of ribosomes during protein biosynthesis.</text>
</comment>
<comment type="catalytic activity">
    <reaction evidence="2">
        <text>GTP + H2O = GDP + phosphate + H(+)</text>
        <dbReference type="Rhea" id="RHEA:19669"/>
        <dbReference type="ChEBI" id="CHEBI:15377"/>
        <dbReference type="ChEBI" id="CHEBI:15378"/>
        <dbReference type="ChEBI" id="CHEBI:37565"/>
        <dbReference type="ChEBI" id="CHEBI:43474"/>
        <dbReference type="ChEBI" id="CHEBI:58189"/>
        <dbReference type="EC" id="3.6.5.3"/>
    </reaction>
    <physiologicalReaction direction="left-to-right" evidence="2">
        <dbReference type="Rhea" id="RHEA:19670"/>
    </physiologicalReaction>
</comment>
<comment type="subunit">
    <text evidence="2">Monomer.</text>
</comment>
<comment type="subcellular location">
    <subcellularLocation>
        <location evidence="2">Cytoplasm</location>
    </subcellularLocation>
</comment>
<comment type="similarity">
    <text evidence="2">Belongs to the TRAFAC class translation factor GTPase superfamily. Classic translation factor GTPase family. EF-Tu/EF-1A subfamily.</text>
</comment>